<accession>A3NTW3</accession>
<protein>
    <recommendedName>
        <fullName evidence="1">Ribosomal RNA large subunit methyltransferase E</fullName>
        <ecNumber evidence="1">2.1.1.166</ecNumber>
    </recommendedName>
    <alternativeName>
        <fullName evidence="1">23S rRNA Um2552 methyltransferase</fullName>
    </alternativeName>
    <alternativeName>
        <fullName evidence="1">rRNA (uridine-2'-O-)-methyltransferase</fullName>
    </alternativeName>
</protein>
<organism>
    <name type="scientific">Burkholderia pseudomallei (strain 1106a)</name>
    <dbReference type="NCBI Taxonomy" id="357348"/>
    <lineage>
        <taxon>Bacteria</taxon>
        <taxon>Pseudomonadati</taxon>
        <taxon>Pseudomonadota</taxon>
        <taxon>Betaproteobacteria</taxon>
        <taxon>Burkholderiales</taxon>
        <taxon>Burkholderiaceae</taxon>
        <taxon>Burkholderia</taxon>
        <taxon>pseudomallei group</taxon>
    </lineage>
</organism>
<evidence type="ECO:0000255" key="1">
    <source>
        <dbReference type="HAMAP-Rule" id="MF_01547"/>
    </source>
</evidence>
<evidence type="ECO:0000256" key="2">
    <source>
        <dbReference type="SAM" id="MobiDB-lite"/>
    </source>
</evidence>
<keyword id="KW-0963">Cytoplasm</keyword>
<keyword id="KW-0489">Methyltransferase</keyword>
<keyword id="KW-0698">rRNA processing</keyword>
<keyword id="KW-0949">S-adenosyl-L-methionine</keyword>
<keyword id="KW-0808">Transferase</keyword>
<reference key="1">
    <citation type="journal article" date="2010" name="Genome Biol. Evol.">
        <title>Continuing evolution of Burkholderia mallei through genome reduction and large-scale rearrangements.</title>
        <authorList>
            <person name="Losada L."/>
            <person name="Ronning C.M."/>
            <person name="DeShazer D."/>
            <person name="Woods D."/>
            <person name="Fedorova N."/>
            <person name="Kim H.S."/>
            <person name="Shabalina S.A."/>
            <person name="Pearson T.R."/>
            <person name="Brinkac L."/>
            <person name="Tan P."/>
            <person name="Nandi T."/>
            <person name="Crabtree J."/>
            <person name="Badger J."/>
            <person name="Beckstrom-Sternberg S."/>
            <person name="Saqib M."/>
            <person name="Schutzer S.E."/>
            <person name="Keim P."/>
            <person name="Nierman W.C."/>
        </authorList>
    </citation>
    <scope>NUCLEOTIDE SEQUENCE [LARGE SCALE GENOMIC DNA]</scope>
    <source>
        <strain>1106a</strain>
    </source>
</reference>
<feature type="chain" id="PRO_0000300590" description="Ribosomal RNA large subunit methyltransferase E">
    <location>
        <begin position="1"/>
        <end position="220"/>
    </location>
</feature>
<feature type="region of interest" description="Disordered" evidence="2">
    <location>
        <begin position="195"/>
        <end position="220"/>
    </location>
</feature>
<feature type="active site" description="Proton acceptor" evidence="1">
    <location>
        <position position="173"/>
    </location>
</feature>
<feature type="binding site" evidence="1">
    <location>
        <position position="60"/>
    </location>
    <ligand>
        <name>S-adenosyl-L-methionine</name>
        <dbReference type="ChEBI" id="CHEBI:59789"/>
    </ligand>
</feature>
<feature type="binding site" evidence="1">
    <location>
        <position position="62"/>
    </location>
    <ligand>
        <name>S-adenosyl-L-methionine</name>
        <dbReference type="ChEBI" id="CHEBI:59789"/>
    </ligand>
</feature>
<feature type="binding site" evidence="1">
    <location>
        <position position="92"/>
    </location>
    <ligand>
        <name>S-adenosyl-L-methionine</name>
        <dbReference type="ChEBI" id="CHEBI:59789"/>
    </ligand>
</feature>
<feature type="binding site" evidence="1">
    <location>
        <position position="108"/>
    </location>
    <ligand>
        <name>S-adenosyl-L-methionine</name>
        <dbReference type="ChEBI" id="CHEBI:59789"/>
    </ligand>
</feature>
<feature type="binding site" evidence="1">
    <location>
        <position position="133"/>
    </location>
    <ligand>
        <name>S-adenosyl-L-methionine</name>
        <dbReference type="ChEBI" id="CHEBI:59789"/>
    </ligand>
</feature>
<comment type="function">
    <text evidence="1">Specifically methylates the uridine in position 2552 of 23S rRNA at the 2'-O position of the ribose in the fully assembled 50S ribosomal subunit.</text>
</comment>
<comment type="catalytic activity">
    <reaction evidence="1">
        <text>uridine(2552) in 23S rRNA + S-adenosyl-L-methionine = 2'-O-methyluridine(2552) in 23S rRNA + S-adenosyl-L-homocysteine + H(+)</text>
        <dbReference type="Rhea" id="RHEA:42720"/>
        <dbReference type="Rhea" id="RHEA-COMP:10202"/>
        <dbReference type="Rhea" id="RHEA-COMP:10203"/>
        <dbReference type="ChEBI" id="CHEBI:15378"/>
        <dbReference type="ChEBI" id="CHEBI:57856"/>
        <dbReference type="ChEBI" id="CHEBI:59789"/>
        <dbReference type="ChEBI" id="CHEBI:65315"/>
        <dbReference type="ChEBI" id="CHEBI:74478"/>
        <dbReference type="EC" id="2.1.1.166"/>
    </reaction>
</comment>
<comment type="subcellular location">
    <subcellularLocation>
        <location evidence="1">Cytoplasm</location>
    </subcellularLocation>
</comment>
<comment type="similarity">
    <text evidence="1">Belongs to the class I-like SAM-binding methyltransferase superfamily. RNA methyltransferase RlmE family.</text>
</comment>
<dbReference type="EC" id="2.1.1.166" evidence="1"/>
<dbReference type="EMBL" id="CP000572">
    <property type="protein sequence ID" value="ABN90188.1"/>
    <property type="molecule type" value="Genomic_DNA"/>
</dbReference>
<dbReference type="RefSeq" id="WP_004193119.1">
    <property type="nucleotide sequence ID" value="NC_009076.1"/>
</dbReference>
<dbReference type="SMR" id="A3NTW3"/>
<dbReference type="KEGG" id="bpl:BURPS1106A_1511"/>
<dbReference type="HOGENOM" id="CLU_009422_4_1_4"/>
<dbReference type="Proteomes" id="UP000006738">
    <property type="component" value="Chromosome I"/>
</dbReference>
<dbReference type="GO" id="GO:0005737">
    <property type="term" value="C:cytoplasm"/>
    <property type="evidence" value="ECO:0007669"/>
    <property type="project" value="UniProtKB-SubCell"/>
</dbReference>
<dbReference type="GO" id="GO:0008650">
    <property type="term" value="F:rRNA (uridine-2'-O-)-methyltransferase activity"/>
    <property type="evidence" value="ECO:0007669"/>
    <property type="project" value="UniProtKB-UniRule"/>
</dbReference>
<dbReference type="FunFam" id="3.40.50.150:FF:000005">
    <property type="entry name" value="Ribosomal RNA large subunit methyltransferase E"/>
    <property type="match status" value="1"/>
</dbReference>
<dbReference type="Gene3D" id="3.40.50.150">
    <property type="entry name" value="Vaccinia Virus protein VP39"/>
    <property type="match status" value="1"/>
</dbReference>
<dbReference type="HAMAP" id="MF_01547">
    <property type="entry name" value="RNA_methyltr_E"/>
    <property type="match status" value="1"/>
</dbReference>
<dbReference type="InterPro" id="IPR050082">
    <property type="entry name" value="RNA_methyltr_RlmE"/>
</dbReference>
<dbReference type="InterPro" id="IPR002877">
    <property type="entry name" value="RNA_MeTrfase_FtsJ_dom"/>
</dbReference>
<dbReference type="InterPro" id="IPR015507">
    <property type="entry name" value="rRNA-MeTfrase_E"/>
</dbReference>
<dbReference type="InterPro" id="IPR029063">
    <property type="entry name" value="SAM-dependent_MTases_sf"/>
</dbReference>
<dbReference type="PANTHER" id="PTHR10920">
    <property type="entry name" value="RIBOSOMAL RNA METHYLTRANSFERASE"/>
    <property type="match status" value="1"/>
</dbReference>
<dbReference type="PANTHER" id="PTHR10920:SF18">
    <property type="entry name" value="RRNA METHYLTRANSFERASE 2, MITOCHONDRIAL"/>
    <property type="match status" value="1"/>
</dbReference>
<dbReference type="Pfam" id="PF01728">
    <property type="entry name" value="FtsJ"/>
    <property type="match status" value="1"/>
</dbReference>
<dbReference type="PIRSF" id="PIRSF005461">
    <property type="entry name" value="23S_rRNA_mtase"/>
    <property type="match status" value="1"/>
</dbReference>
<dbReference type="SUPFAM" id="SSF53335">
    <property type="entry name" value="S-adenosyl-L-methionine-dependent methyltransferases"/>
    <property type="match status" value="1"/>
</dbReference>
<proteinExistence type="inferred from homology"/>
<gene>
    <name evidence="1" type="primary">rlmE</name>
    <name evidence="1" type="synonym">ftsJ</name>
    <name evidence="1" type="synonym">rrmJ</name>
    <name type="ordered locus">BURPS1106A_1511</name>
</gene>
<sequence length="220" mass="24660">MAKNRFNQSWLHDHINDPYVKMAQREGYRARAAYKLKEIDEQDKLIRPGQVIVDLGAAPGSWSQYARNKLAQGKRRDAVREGGIDGTIIALDMLPMEPVADVHFIQGDFREESVLHQLEEVLAGRAVDLVISDMAPNLSGVAVADAARIEHVCDLALEFAQNHLKPDGALLVKCFHGSGYSQIVEKFKHQFKTVAPRKPKASRDKSSETFILGRHLKQPR</sequence>
<name>RLME_BURP0</name>